<gene>
    <name evidence="1" type="primary">aroA</name>
    <name type="ordered locus">RPB_0643</name>
</gene>
<organism>
    <name type="scientific">Rhodopseudomonas palustris (strain HaA2)</name>
    <dbReference type="NCBI Taxonomy" id="316058"/>
    <lineage>
        <taxon>Bacteria</taxon>
        <taxon>Pseudomonadati</taxon>
        <taxon>Pseudomonadota</taxon>
        <taxon>Alphaproteobacteria</taxon>
        <taxon>Hyphomicrobiales</taxon>
        <taxon>Nitrobacteraceae</taxon>
        <taxon>Rhodopseudomonas</taxon>
    </lineage>
</organism>
<proteinExistence type="inferred from homology"/>
<evidence type="ECO:0000255" key="1">
    <source>
        <dbReference type="HAMAP-Rule" id="MF_00210"/>
    </source>
</evidence>
<sequence length="445" mass="46444">MSHSDHTAPLEARLSAALSGTARVPGDKSISHRALILGALAVGETRISGLLEGEDVLNTARAMRALGAQVERTGDCAWSVHGVGVAGFAPPAAPLDFGNSGTGCRLAMGAVAGSPIIATFDGDASLRSRPMRRIVDPLEQMGARVTQSADGGRLPLTLQGARDPLPITYRTPVPSAQIKSAVLLAGLSAPGVTTVIEAEASRDHTELMLQHFGATVVTEPEGPHGRKISLTGQPELRGAPVVVPADPSSAAFPMVAALIVPGSDVVLTEVMTNPLRTGLITTLREMGGLIEESETRGDAGEPMARFRIRGSQLRGVEVPPERAPSMIDEYLVLAVAAAFAEGTTIMRGLHELRVKESDRLEATAAMLRVNGVTVEISGDDLIVEGKGHVPGGGLVATHMDHRIAMSALVMGLAADKPVRVDDTAFIATSFPDFVPMMQRLGAEFG</sequence>
<name>AROA_RHOP2</name>
<accession>Q2J2F6</accession>
<feature type="chain" id="PRO_1000058607" description="3-phosphoshikimate 1-carboxyvinyltransferase">
    <location>
        <begin position="1"/>
        <end position="445"/>
    </location>
</feature>
<feature type="active site" description="Proton acceptor" evidence="1">
    <location>
        <position position="328"/>
    </location>
</feature>
<feature type="binding site" evidence="1">
    <location>
        <position position="28"/>
    </location>
    <ligand>
        <name>3-phosphoshikimate</name>
        <dbReference type="ChEBI" id="CHEBI:145989"/>
    </ligand>
</feature>
<feature type="binding site" evidence="1">
    <location>
        <position position="28"/>
    </location>
    <ligand>
        <name>phosphoenolpyruvate</name>
        <dbReference type="ChEBI" id="CHEBI:58702"/>
    </ligand>
</feature>
<feature type="binding site" evidence="1">
    <location>
        <position position="29"/>
    </location>
    <ligand>
        <name>3-phosphoshikimate</name>
        <dbReference type="ChEBI" id="CHEBI:145989"/>
    </ligand>
</feature>
<feature type="binding site" evidence="1">
    <location>
        <position position="33"/>
    </location>
    <ligand>
        <name>3-phosphoshikimate</name>
        <dbReference type="ChEBI" id="CHEBI:145989"/>
    </ligand>
</feature>
<feature type="binding site" evidence="1">
    <location>
        <position position="101"/>
    </location>
    <ligand>
        <name>phosphoenolpyruvate</name>
        <dbReference type="ChEBI" id="CHEBI:58702"/>
    </ligand>
</feature>
<feature type="binding site" evidence="1">
    <location>
        <position position="129"/>
    </location>
    <ligand>
        <name>phosphoenolpyruvate</name>
        <dbReference type="ChEBI" id="CHEBI:58702"/>
    </ligand>
</feature>
<feature type="binding site" evidence="1">
    <location>
        <position position="175"/>
    </location>
    <ligand>
        <name>3-phosphoshikimate</name>
        <dbReference type="ChEBI" id="CHEBI:145989"/>
    </ligand>
</feature>
<feature type="binding site" evidence="1">
    <location>
        <position position="177"/>
    </location>
    <ligand>
        <name>3-phosphoshikimate</name>
        <dbReference type="ChEBI" id="CHEBI:145989"/>
    </ligand>
</feature>
<feature type="binding site" evidence="1">
    <location>
        <position position="177"/>
    </location>
    <ligand>
        <name>phosphoenolpyruvate</name>
        <dbReference type="ChEBI" id="CHEBI:58702"/>
    </ligand>
</feature>
<feature type="binding site" evidence="1">
    <location>
        <position position="328"/>
    </location>
    <ligand>
        <name>3-phosphoshikimate</name>
        <dbReference type="ChEBI" id="CHEBI:145989"/>
    </ligand>
</feature>
<feature type="binding site" evidence="1">
    <location>
        <position position="355"/>
    </location>
    <ligand>
        <name>3-phosphoshikimate</name>
        <dbReference type="ChEBI" id="CHEBI:145989"/>
    </ligand>
</feature>
<feature type="binding site" evidence="1">
    <location>
        <position position="359"/>
    </location>
    <ligand>
        <name>phosphoenolpyruvate</name>
        <dbReference type="ChEBI" id="CHEBI:58702"/>
    </ligand>
</feature>
<feature type="binding site" evidence="1">
    <location>
        <position position="402"/>
    </location>
    <ligand>
        <name>phosphoenolpyruvate</name>
        <dbReference type="ChEBI" id="CHEBI:58702"/>
    </ligand>
</feature>
<protein>
    <recommendedName>
        <fullName evidence="1">3-phosphoshikimate 1-carboxyvinyltransferase</fullName>
        <ecNumber evidence="1">2.5.1.19</ecNumber>
    </recommendedName>
    <alternativeName>
        <fullName evidence="1">5-enolpyruvylshikimate-3-phosphate synthase</fullName>
        <shortName evidence="1">EPSP synthase</shortName>
        <shortName evidence="1">EPSPS</shortName>
    </alternativeName>
</protein>
<dbReference type="EC" id="2.5.1.19" evidence="1"/>
<dbReference type="EMBL" id="CP000250">
    <property type="protein sequence ID" value="ABD05354.1"/>
    <property type="molecule type" value="Genomic_DNA"/>
</dbReference>
<dbReference type="RefSeq" id="WP_011439544.1">
    <property type="nucleotide sequence ID" value="NC_007778.1"/>
</dbReference>
<dbReference type="SMR" id="Q2J2F6"/>
<dbReference type="STRING" id="316058.RPB_0643"/>
<dbReference type="KEGG" id="rpb:RPB_0643"/>
<dbReference type="eggNOG" id="COG0128">
    <property type="taxonomic scope" value="Bacteria"/>
</dbReference>
<dbReference type="HOGENOM" id="CLU_024321_0_1_5"/>
<dbReference type="OrthoDB" id="9809920at2"/>
<dbReference type="UniPathway" id="UPA00053">
    <property type="reaction ID" value="UER00089"/>
</dbReference>
<dbReference type="Proteomes" id="UP000008809">
    <property type="component" value="Chromosome"/>
</dbReference>
<dbReference type="GO" id="GO:0005737">
    <property type="term" value="C:cytoplasm"/>
    <property type="evidence" value="ECO:0007669"/>
    <property type="project" value="UniProtKB-SubCell"/>
</dbReference>
<dbReference type="GO" id="GO:0003866">
    <property type="term" value="F:3-phosphoshikimate 1-carboxyvinyltransferase activity"/>
    <property type="evidence" value="ECO:0007669"/>
    <property type="project" value="UniProtKB-UniRule"/>
</dbReference>
<dbReference type="GO" id="GO:0008652">
    <property type="term" value="P:amino acid biosynthetic process"/>
    <property type="evidence" value="ECO:0007669"/>
    <property type="project" value="UniProtKB-KW"/>
</dbReference>
<dbReference type="GO" id="GO:0009073">
    <property type="term" value="P:aromatic amino acid family biosynthetic process"/>
    <property type="evidence" value="ECO:0007669"/>
    <property type="project" value="UniProtKB-KW"/>
</dbReference>
<dbReference type="GO" id="GO:0009423">
    <property type="term" value="P:chorismate biosynthetic process"/>
    <property type="evidence" value="ECO:0007669"/>
    <property type="project" value="UniProtKB-UniRule"/>
</dbReference>
<dbReference type="CDD" id="cd01556">
    <property type="entry name" value="EPSP_synthase"/>
    <property type="match status" value="1"/>
</dbReference>
<dbReference type="FunFam" id="3.65.10.10:FF:000005">
    <property type="entry name" value="3-phosphoshikimate 1-carboxyvinyltransferase"/>
    <property type="match status" value="1"/>
</dbReference>
<dbReference type="FunFam" id="3.65.10.10:FF:000006">
    <property type="entry name" value="3-phosphoshikimate 1-carboxyvinyltransferase"/>
    <property type="match status" value="1"/>
</dbReference>
<dbReference type="Gene3D" id="3.65.10.10">
    <property type="entry name" value="Enolpyruvate transferase domain"/>
    <property type="match status" value="2"/>
</dbReference>
<dbReference type="HAMAP" id="MF_00210">
    <property type="entry name" value="EPSP_synth"/>
    <property type="match status" value="1"/>
</dbReference>
<dbReference type="InterPro" id="IPR001986">
    <property type="entry name" value="Enolpyruvate_Tfrase_dom"/>
</dbReference>
<dbReference type="InterPro" id="IPR036968">
    <property type="entry name" value="Enolpyruvate_Tfrase_sf"/>
</dbReference>
<dbReference type="InterPro" id="IPR006264">
    <property type="entry name" value="EPSP_synthase"/>
</dbReference>
<dbReference type="InterPro" id="IPR023193">
    <property type="entry name" value="EPSP_synthase_CS"/>
</dbReference>
<dbReference type="InterPro" id="IPR013792">
    <property type="entry name" value="RNA3'P_cycl/enolpyr_Trfase_a/b"/>
</dbReference>
<dbReference type="NCBIfam" id="TIGR01356">
    <property type="entry name" value="aroA"/>
    <property type="match status" value="1"/>
</dbReference>
<dbReference type="PANTHER" id="PTHR21090">
    <property type="entry name" value="AROM/DEHYDROQUINATE SYNTHASE"/>
    <property type="match status" value="1"/>
</dbReference>
<dbReference type="PANTHER" id="PTHR21090:SF5">
    <property type="entry name" value="PENTAFUNCTIONAL AROM POLYPEPTIDE"/>
    <property type="match status" value="1"/>
</dbReference>
<dbReference type="Pfam" id="PF00275">
    <property type="entry name" value="EPSP_synthase"/>
    <property type="match status" value="1"/>
</dbReference>
<dbReference type="PIRSF" id="PIRSF000505">
    <property type="entry name" value="EPSPS"/>
    <property type="match status" value="1"/>
</dbReference>
<dbReference type="SUPFAM" id="SSF55205">
    <property type="entry name" value="EPT/RTPC-like"/>
    <property type="match status" value="1"/>
</dbReference>
<dbReference type="PROSITE" id="PS00104">
    <property type="entry name" value="EPSP_SYNTHASE_1"/>
    <property type="match status" value="1"/>
</dbReference>
<dbReference type="PROSITE" id="PS00885">
    <property type="entry name" value="EPSP_SYNTHASE_2"/>
    <property type="match status" value="1"/>
</dbReference>
<reference key="1">
    <citation type="submission" date="2006-01" db="EMBL/GenBank/DDBJ databases">
        <title>Complete sequence of Rhodopseudomonas palustris HaA2.</title>
        <authorList>
            <consortium name="US DOE Joint Genome Institute"/>
            <person name="Copeland A."/>
            <person name="Lucas S."/>
            <person name="Lapidus A."/>
            <person name="Barry K."/>
            <person name="Detter J.C."/>
            <person name="Glavina T."/>
            <person name="Hammon N."/>
            <person name="Israni S."/>
            <person name="Pitluck S."/>
            <person name="Chain P."/>
            <person name="Malfatti S."/>
            <person name="Shin M."/>
            <person name="Vergez L."/>
            <person name="Schmutz J."/>
            <person name="Larimer F."/>
            <person name="Land M."/>
            <person name="Hauser L."/>
            <person name="Pelletier D.A."/>
            <person name="Kyrpides N."/>
            <person name="Anderson I."/>
            <person name="Oda Y."/>
            <person name="Harwood C.S."/>
            <person name="Richardson P."/>
        </authorList>
    </citation>
    <scope>NUCLEOTIDE SEQUENCE [LARGE SCALE GENOMIC DNA]</scope>
    <source>
        <strain>HaA2</strain>
    </source>
</reference>
<keyword id="KW-0028">Amino-acid biosynthesis</keyword>
<keyword id="KW-0057">Aromatic amino acid biosynthesis</keyword>
<keyword id="KW-0963">Cytoplasm</keyword>
<keyword id="KW-1185">Reference proteome</keyword>
<keyword id="KW-0808">Transferase</keyword>
<comment type="function">
    <text evidence="1">Catalyzes the transfer of the enolpyruvyl moiety of phosphoenolpyruvate (PEP) to the 5-hydroxyl of shikimate-3-phosphate (S3P) to produce enolpyruvyl shikimate-3-phosphate and inorganic phosphate.</text>
</comment>
<comment type="catalytic activity">
    <reaction evidence="1">
        <text>3-phosphoshikimate + phosphoenolpyruvate = 5-O-(1-carboxyvinyl)-3-phosphoshikimate + phosphate</text>
        <dbReference type="Rhea" id="RHEA:21256"/>
        <dbReference type="ChEBI" id="CHEBI:43474"/>
        <dbReference type="ChEBI" id="CHEBI:57701"/>
        <dbReference type="ChEBI" id="CHEBI:58702"/>
        <dbReference type="ChEBI" id="CHEBI:145989"/>
        <dbReference type="EC" id="2.5.1.19"/>
    </reaction>
    <physiologicalReaction direction="left-to-right" evidence="1">
        <dbReference type="Rhea" id="RHEA:21257"/>
    </physiologicalReaction>
</comment>
<comment type="pathway">
    <text evidence="1">Metabolic intermediate biosynthesis; chorismate biosynthesis; chorismate from D-erythrose 4-phosphate and phosphoenolpyruvate: step 6/7.</text>
</comment>
<comment type="subunit">
    <text evidence="1">Monomer.</text>
</comment>
<comment type="subcellular location">
    <subcellularLocation>
        <location evidence="1">Cytoplasm</location>
    </subcellularLocation>
</comment>
<comment type="similarity">
    <text evidence="1">Belongs to the EPSP synthase family.</text>
</comment>